<sequence length="238" mass="26733">MAVVTLAEMMEAGAHFGHQTRRWNPKMSRYIYCARNGVHIIDLVQTAVCMNNAYKWVRSAARSGKRFLFVGTKKQASEVVAQEALRCGSSYVNQRWLGGMLTNWTTMKARIDRLKDLERMESSGAIAMRPKKEGAVLRRELERLQKYLGGLKNMRRIPDVVVLVDQRRETNAVLEARKLDISLVSMLDTNCDPDLCEVPIPCNDDAVRSIQLVLSRLADAINEGRHGGQDGRGDDGQG</sequence>
<protein>
    <recommendedName>
        <fullName evidence="1">Small ribosomal subunit protein uS2</fullName>
    </recommendedName>
    <alternativeName>
        <fullName evidence="2">30S ribosomal protein S2</fullName>
    </alternativeName>
</protein>
<name>RS2_SYNS3</name>
<dbReference type="EMBL" id="CP000435">
    <property type="protein sequence ID" value="ABI47440.1"/>
    <property type="molecule type" value="Genomic_DNA"/>
</dbReference>
<dbReference type="RefSeq" id="WP_006852470.1">
    <property type="nucleotide sequence ID" value="NC_008319.1"/>
</dbReference>
<dbReference type="SMR" id="Q0IAN9"/>
<dbReference type="STRING" id="64471.sync_1275"/>
<dbReference type="KEGG" id="syg:sync_1275"/>
<dbReference type="eggNOG" id="COG0052">
    <property type="taxonomic scope" value="Bacteria"/>
</dbReference>
<dbReference type="HOGENOM" id="CLU_040318_1_2_3"/>
<dbReference type="OrthoDB" id="9808036at2"/>
<dbReference type="Proteomes" id="UP000001961">
    <property type="component" value="Chromosome"/>
</dbReference>
<dbReference type="GO" id="GO:0022627">
    <property type="term" value="C:cytosolic small ribosomal subunit"/>
    <property type="evidence" value="ECO:0007669"/>
    <property type="project" value="TreeGrafter"/>
</dbReference>
<dbReference type="GO" id="GO:0003735">
    <property type="term" value="F:structural constituent of ribosome"/>
    <property type="evidence" value="ECO:0007669"/>
    <property type="project" value="InterPro"/>
</dbReference>
<dbReference type="GO" id="GO:0006412">
    <property type="term" value="P:translation"/>
    <property type="evidence" value="ECO:0007669"/>
    <property type="project" value="UniProtKB-UniRule"/>
</dbReference>
<dbReference type="CDD" id="cd01425">
    <property type="entry name" value="RPS2"/>
    <property type="match status" value="1"/>
</dbReference>
<dbReference type="FunFam" id="1.10.287.610:FF:000001">
    <property type="entry name" value="30S ribosomal protein S2"/>
    <property type="match status" value="1"/>
</dbReference>
<dbReference type="Gene3D" id="3.40.50.10490">
    <property type="entry name" value="Glucose-6-phosphate isomerase like protein, domain 1"/>
    <property type="match status" value="1"/>
</dbReference>
<dbReference type="Gene3D" id="1.10.287.610">
    <property type="entry name" value="Helix hairpin bin"/>
    <property type="match status" value="1"/>
</dbReference>
<dbReference type="HAMAP" id="MF_00291_B">
    <property type="entry name" value="Ribosomal_uS2_B"/>
    <property type="match status" value="1"/>
</dbReference>
<dbReference type="InterPro" id="IPR001865">
    <property type="entry name" value="Ribosomal_uS2"/>
</dbReference>
<dbReference type="InterPro" id="IPR005706">
    <property type="entry name" value="Ribosomal_uS2_bac/mit/plastid"/>
</dbReference>
<dbReference type="InterPro" id="IPR018130">
    <property type="entry name" value="Ribosomal_uS2_CS"/>
</dbReference>
<dbReference type="InterPro" id="IPR023591">
    <property type="entry name" value="Ribosomal_uS2_flav_dom_sf"/>
</dbReference>
<dbReference type="NCBIfam" id="TIGR01011">
    <property type="entry name" value="rpsB_bact"/>
    <property type="match status" value="1"/>
</dbReference>
<dbReference type="PANTHER" id="PTHR12534">
    <property type="entry name" value="30S RIBOSOMAL PROTEIN S2 PROKARYOTIC AND ORGANELLAR"/>
    <property type="match status" value="1"/>
</dbReference>
<dbReference type="PANTHER" id="PTHR12534:SF0">
    <property type="entry name" value="SMALL RIBOSOMAL SUBUNIT PROTEIN US2M"/>
    <property type="match status" value="1"/>
</dbReference>
<dbReference type="Pfam" id="PF00318">
    <property type="entry name" value="Ribosomal_S2"/>
    <property type="match status" value="1"/>
</dbReference>
<dbReference type="PRINTS" id="PR00395">
    <property type="entry name" value="RIBOSOMALS2"/>
</dbReference>
<dbReference type="SUPFAM" id="SSF52313">
    <property type="entry name" value="Ribosomal protein S2"/>
    <property type="match status" value="1"/>
</dbReference>
<dbReference type="PROSITE" id="PS00962">
    <property type="entry name" value="RIBOSOMAL_S2_1"/>
    <property type="match status" value="1"/>
</dbReference>
<proteinExistence type="inferred from homology"/>
<evidence type="ECO:0000255" key="1">
    <source>
        <dbReference type="HAMAP-Rule" id="MF_00291"/>
    </source>
</evidence>
<evidence type="ECO:0000305" key="2"/>
<gene>
    <name evidence="1" type="primary">rpsB</name>
    <name evidence="1" type="synonym">rps2</name>
    <name type="ordered locus">sync_1275</name>
</gene>
<organism>
    <name type="scientific">Synechococcus sp. (strain CC9311)</name>
    <dbReference type="NCBI Taxonomy" id="64471"/>
    <lineage>
        <taxon>Bacteria</taxon>
        <taxon>Bacillati</taxon>
        <taxon>Cyanobacteriota</taxon>
        <taxon>Cyanophyceae</taxon>
        <taxon>Synechococcales</taxon>
        <taxon>Synechococcaceae</taxon>
        <taxon>Synechococcus</taxon>
    </lineage>
</organism>
<comment type="similarity">
    <text evidence="1">Belongs to the universal ribosomal protein uS2 family.</text>
</comment>
<reference key="1">
    <citation type="journal article" date="2006" name="Proc. Natl. Acad. Sci. U.S.A.">
        <title>Genome sequence of Synechococcus CC9311: insights into adaptation to a coastal environment.</title>
        <authorList>
            <person name="Palenik B."/>
            <person name="Ren Q."/>
            <person name="Dupont C.L."/>
            <person name="Myers G.S."/>
            <person name="Heidelberg J.F."/>
            <person name="Badger J.H."/>
            <person name="Madupu R."/>
            <person name="Nelson W.C."/>
            <person name="Brinkac L.M."/>
            <person name="Dodson R.J."/>
            <person name="Durkin A.S."/>
            <person name="Daugherty S.C."/>
            <person name="Sullivan S.A."/>
            <person name="Khouri H."/>
            <person name="Mohamoud Y."/>
            <person name="Halpin R."/>
            <person name="Paulsen I.T."/>
        </authorList>
    </citation>
    <scope>NUCLEOTIDE SEQUENCE [LARGE SCALE GENOMIC DNA]</scope>
    <source>
        <strain>CC9311</strain>
    </source>
</reference>
<accession>Q0IAN9</accession>
<keyword id="KW-1185">Reference proteome</keyword>
<keyword id="KW-0687">Ribonucleoprotein</keyword>
<keyword id="KW-0689">Ribosomal protein</keyword>
<feature type="chain" id="PRO_1000004105" description="Small ribosomal subunit protein uS2">
    <location>
        <begin position="1"/>
        <end position="238"/>
    </location>
</feature>